<keyword id="KW-0963">Cytoplasm</keyword>
<evidence type="ECO:0000250" key="1"/>
<evidence type="ECO:0000256" key="2">
    <source>
        <dbReference type="SAM" id="MobiDB-lite"/>
    </source>
</evidence>
<evidence type="ECO:0000305" key="3"/>
<accession>A6ZSM1</accession>
<proteinExistence type="inferred from homology"/>
<feature type="chain" id="PRO_0000408220" description="Oxidant-induced cell-cycle arrest protein 5">
    <location>
        <begin position="1"/>
        <end position="679"/>
    </location>
</feature>
<feature type="domain" description="Rab-GAP TBC">
    <location>
        <begin position="50"/>
        <end position="441"/>
    </location>
</feature>
<feature type="region of interest" description="Disordered" evidence="2">
    <location>
        <begin position="135"/>
        <end position="159"/>
    </location>
</feature>
<feature type="region of interest" description="Disordered" evidence="2">
    <location>
        <begin position="250"/>
        <end position="271"/>
    </location>
</feature>
<feature type="region of interest" description="Disordered" evidence="2">
    <location>
        <begin position="524"/>
        <end position="544"/>
    </location>
</feature>
<feature type="compositionally biased region" description="Low complexity" evidence="2">
    <location>
        <begin position="135"/>
        <end position="153"/>
    </location>
</feature>
<feature type="compositionally biased region" description="Polar residues" evidence="2">
    <location>
        <begin position="524"/>
        <end position="539"/>
    </location>
</feature>
<comment type="function">
    <text evidence="1">Required for replication of brome mosaic virus (BMV), a positive-strand RNA virus.</text>
</comment>
<comment type="subcellular location">
    <subcellularLocation>
        <location evidence="1">Cytoplasm</location>
    </subcellularLocation>
</comment>
<comment type="similarity">
    <text evidence="3">Belongs to the OCA5 family.</text>
</comment>
<name>OCA5_YEAS7</name>
<dbReference type="EMBL" id="AAFW02000081">
    <property type="protein sequence ID" value="EDN62462.1"/>
    <property type="molecule type" value="Genomic_DNA"/>
</dbReference>
<dbReference type="HOGENOM" id="CLU_028817_0_0_1"/>
<dbReference type="Proteomes" id="UP000007060">
    <property type="component" value="Unassembled WGS sequence"/>
</dbReference>
<dbReference type="GO" id="GO:0005737">
    <property type="term" value="C:cytoplasm"/>
    <property type="evidence" value="ECO:0007669"/>
    <property type="project" value="UniProtKB-SubCell"/>
</dbReference>
<dbReference type="Gene3D" id="1.10.472.80">
    <property type="entry name" value="Ypt/Rab-GAP domain of gyp1p, domain 3"/>
    <property type="match status" value="1"/>
</dbReference>
<dbReference type="InterPro" id="IPR000195">
    <property type="entry name" value="Rab-GAP-TBC_dom"/>
</dbReference>
<dbReference type="InterPro" id="IPR035969">
    <property type="entry name" value="Rab-GAP_TBC_sf"/>
</dbReference>
<dbReference type="SMART" id="SM00164">
    <property type="entry name" value="TBC"/>
    <property type="match status" value="1"/>
</dbReference>
<dbReference type="SUPFAM" id="SSF47923">
    <property type="entry name" value="Ypt/Rab-GAP domain of gyp1p"/>
    <property type="match status" value="1"/>
</dbReference>
<organism>
    <name type="scientific">Saccharomyces cerevisiae (strain YJM789)</name>
    <name type="common">Baker's yeast</name>
    <dbReference type="NCBI Taxonomy" id="307796"/>
    <lineage>
        <taxon>Eukaryota</taxon>
        <taxon>Fungi</taxon>
        <taxon>Dikarya</taxon>
        <taxon>Ascomycota</taxon>
        <taxon>Saccharomycotina</taxon>
        <taxon>Saccharomycetes</taxon>
        <taxon>Saccharomycetales</taxon>
        <taxon>Saccharomycetaceae</taxon>
        <taxon>Saccharomyces</taxon>
    </lineage>
</organism>
<gene>
    <name type="primary">OCA5</name>
    <name type="ORF">SCY_2355</name>
</gene>
<protein>
    <recommendedName>
        <fullName>Oxidant-induced cell-cycle arrest protein 5</fullName>
    </recommendedName>
</protein>
<reference key="1">
    <citation type="journal article" date="2007" name="Proc. Natl. Acad. Sci. U.S.A.">
        <title>Genome sequencing and comparative analysis of Saccharomyces cerevisiae strain YJM789.</title>
        <authorList>
            <person name="Wei W."/>
            <person name="McCusker J.H."/>
            <person name="Hyman R.W."/>
            <person name="Jones T."/>
            <person name="Ning Y."/>
            <person name="Cao Z."/>
            <person name="Gu Z."/>
            <person name="Bruno D."/>
            <person name="Miranda M."/>
            <person name="Nguyen M."/>
            <person name="Wilhelmy J."/>
            <person name="Komp C."/>
            <person name="Tamse R."/>
            <person name="Wang X."/>
            <person name="Jia P."/>
            <person name="Luedi P."/>
            <person name="Oefner P.J."/>
            <person name="David L."/>
            <person name="Dietrich F.S."/>
            <person name="Li Y."/>
            <person name="Davis R.W."/>
            <person name="Steinmetz L.M."/>
        </authorList>
    </citation>
    <scope>NUCLEOTIDE SEQUENCE [LARGE SCALE GENOMIC DNA]</scope>
    <source>
        <strain>YJM789</strain>
    </source>
</reference>
<sequence length="679" mass="77756">MHDKKSPMANSHYLKNLKQQFRNKNLIETTIHLVKCNDHDSLAFLARTYGVPPQLRHVVWPILLKYHPMCISPNITSNTISWDPITNDFILNDPFLKSKAPTDKQDKSDDENILPYDIESIILHDLKKYFHSRSNPAGSSSNANTTNIATPTPVSSSDASTISSMEVLSPSLDYEFQIIETLKNAIVKFLLKWSKIFKYESGLAWIALGLAEWYPIYPYETMSPFNETHSFYEVEDYVVLSGRKHALLSTNNGNNGNSNSSSNNTNNNNTNITSGMHNLSINTNTSLHNSPYISHTLSYLYKEYPLPFELRSKLPTKPIFSFSALFERLALVILHCPDTILAHKQLKNDSNASSSSKANSNFNTNYFPIISGGDLSFQTQVFFKVFSSILPELYQPLTEESSLQPSSSRNSWIYWWLKCSGAKALQRQDRGRVWDLLLGWRPKPNMDTINFFLNYNDKKMDHLYHDTPQCDNEQYWMKDWIALYNNDPFWFPDLDSMALGSKKFPYDYSVFKELILRNRYGGTQSKAQKDNTVPSPGSDSNDKSELKLPFSSIDPHMQLIFIFIAILQFNEFKLLEFEEAEISEFLNNVPLLTKFDDSSYRKLYENTESSITSLPSSPTTSTMASLQSSSNSSAHISNYHMLIEVGNDAKASHCFDDLLNMAGDIWRKWLWRELEESSL</sequence>